<name>TAL_STRP1</name>
<reference key="1">
    <citation type="journal article" date="2001" name="Proc. Natl. Acad. Sci. U.S.A.">
        <title>Complete genome sequence of an M1 strain of Streptococcus pyogenes.</title>
        <authorList>
            <person name="Ferretti J.J."/>
            <person name="McShan W.M."/>
            <person name="Ajdic D.J."/>
            <person name="Savic D.J."/>
            <person name="Savic G."/>
            <person name="Lyon K."/>
            <person name="Primeaux C."/>
            <person name="Sezate S."/>
            <person name="Suvorov A.N."/>
            <person name="Kenton S."/>
            <person name="Lai H.S."/>
            <person name="Lin S.P."/>
            <person name="Qian Y."/>
            <person name="Jia H.G."/>
            <person name="Najar F.Z."/>
            <person name="Ren Q."/>
            <person name="Zhu H."/>
            <person name="Song L."/>
            <person name="White J."/>
            <person name="Yuan X."/>
            <person name="Clifton S.W."/>
            <person name="Roe B.A."/>
            <person name="McLaughlin R.E."/>
        </authorList>
    </citation>
    <scope>NUCLEOTIDE SEQUENCE [LARGE SCALE GENOMIC DNA]</scope>
    <source>
        <strain>ATCC 700294 / SF370 / Serotype M1</strain>
    </source>
</reference>
<reference key="2">
    <citation type="journal article" date="2005" name="J. Infect. Dis.">
        <title>Evolutionary origin and emergence of a highly successful clone of serotype M1 group A Streptococcus involved multiple horizontal gene transfer events.</title>
        <authorList>
            <person name="Sumby P."/>
            <person name="Porcella S.F."/>
            <person name="Madrigal A.G."/>
            <person name="Barbian K.D."/>
            <person name="Virtaneva K."/>
            <person name="Ricklefs S.M."/>
            <person name="Sturdevant D.E."/>
            <person name="Graham M.R."/>
            <person name="Vuopio-Varkila J."/>
            <person name="Hoe N.P."/>
            <person name="Musser J.M."/>
        </authorList>
    </citation>
    <scope>NUCLEOTIDE SEQUENCE [LARGE SCALE GENOMIC DNA]</scope>
    <source>
        <strain>ATCC BAA-947 / MGAS5005 / Serotype M1</strain>
    </source>
</reference>
<organism>
    <name type="scientific">Streptococcus pyogenes serotype M1</name>
    <dbReference type="NCBI Taxonomy" id="301447"/>
    <lineage>
        <taxon>Bacteria</taxon>
        <taxon>Bacillati</taxon>
        <taxon>Bacillota</taxon>
        <taxon>Bacilli</taxon>
        <taxon>Lactobacillales</taxon>
        <taxon>Streptococcaceae</taxon>
        <taxon>Streptococcus</taxon>
    </lineage>
</organism>
<dbReference type="EC" id="2.2.1.2"/>
<dbReference type="EMBL" id="AE004092">
    <property type="protein sequence ID" value="AAK34435.1"/>
    <property type="molecule type" value="Genomic_DNA"/>
</dbReference>
<dbReference type="EMBL" id="CP000017">
    <property type="protein sequence ID" value="AAZ51994.1"/>
    <property type="molecule type" value="Genomic_DNA"/>
</dbReference>
<dbReference type="RefSeq" id="NP_269714.1">
    <property type="nucleotide sequence ID" value="NC_002737.2"/>
</dbReference>
<dbReference type="SMR" id="P66959"/>
<dbReference type="PaxDb" id="1314-HKU360_01428"/>
<dbReference type="KEGG" id="spy:SPy_1678"/>
<dbReference type="KEGG" id="spz:M5005_Spy1376"/>
<dbReference type="PATRIC" id="fig|160490.10.peg.1460"/>
<dbReference type="HOGENOM" id="CLU_079764_0_0_9"/>
<dbReference type="OMA" id="FRIQHID"/>
<dbReference type="UniPathway" id="UPA00115">
    <property type="reaction ID" value="UER00414"/>
</dbReference>
<dbReference type="Proteomes" id="UP000000750">
    <property type="component" value="Chromosome"/>
</dbReference>
<dbReference type="GO" id="GO:0005737">
    <property type="term" value="C:cytoplasm"/>
    <property type="evidence" value="ECO:0007669"/>
    <property type="project" value="UniProtKB-SubCell"/>
</dbReference>
<dbReference type="GO" id="GO:0016832">
    <property type="term" value="F:aldehyde-lyase activity"/>
    <property type="evidence" value="ECO:0007669"/>
    <property type="project" value="InterPro"/>
</dbReference>
<dbReference type="GO" id="GO:0004801">
    <property type="term" value="F:transaldolase activity"/>
    <property type="evidence" value="ECO:0007669"/>
    <property type="project" value="UniProtKB-UniRule"/>
</dbReference>
<dbReference type="GO" id="GO:0005975">
    <property type="term" value="P:carbohydrate metabolic process"/>
    <property type="evidence" value="ECO:0007669"/>
    <property type="project" value="InterPro"/>
</dbReference>
<dbReference type="GO" id="GO:0006098">
    <property type="term" value="P:pentose-phosphate shunt"/>
    <property type="evidence" value="ECO:0007669"/>
    <property type="project" value="UniProtKB-UniRule"/>
</dbReference>
<dbReference type="CDD" id="cd00956">
    <property type="entry name" value="Transaldolase_FSA"/>
    <property type="match status" value="1"/>
</dbReference>
<dbReference type="FunFam" id="3.20.20.70:FF:000018">
    <property type="entry name" value="Probable transaldolase"/>
    <property type="match status" value="1"/>
</dbReference>
<dbReference type="Gene3D" id="3.20.20.70">
    <property type="entry name" value="Aldolase class I"/>
    <property type="match status" value="1"/>
</dbReference>
<dbReference type="HAMAP" id="MF_00494">
    <property type="entry name" value="Transaldolase_3b"/>
    <property type="match status" value="1"/>
</dbReference>
<dbReference type="InterPro" id="IPR013785">
    <property type="entry name" value="Aldolase_TIM"/>
</dbReference>
<dbReference type="InterPro" id="IPR001585">
    <property type="entry name" value="TAL/FSA"/>
</dbReference>
<dbReference type="InterPro" id="IPR022999">
    <property type="entry name" value="Transaldolase_3B"/>
</dbReference>
<dbReference type="InterPro" id="IPR004731">
    <property type="entry name" value="Transaldolase_3B/F6P_aldolase"/>
</dbReference>
<dbReference type="InterPro" id="IPR018225">
    <property type="entry name" value="Transaldolase_AS"/>
</dbReference>
<dbReference type="InterPro" id="IPR033919">
    <property type="entry name" value="TSA/FSA_arc/bac"/>
</dbReference>
<dbReference type="NCBIfam" id="TIGR00875">
    <property type="entry name" value="fsa_talC_mipB"/>
    <property type="match status" value="1"/>
</dbReference>
<dbReference type="PANTHER" id="PTHR10683">
    <property type="entry name" value="TRANSALDOLASE"/>
    <property type="match status" value="1"/>
</dbReference>
<dbReference type="PANTHER" id="PTHR10683:SF36">
    <property type="entry name" value="TRANSALDOLASE"/>
    <property type="match status" value="1"/>
</dbReference>
<dbReference type="Pfam" id="PF00923">
    <property type="entry name" value="TAL_FSA"/>
    <property type="match status" value="1"/>
</dbReference>
<dbReference type="SUPFAM" id="SSF51569">
    <property type="entry name" value="Aldolase"/>
    <property type="match status" value="1"/>
</dbReference>
<dbReference type="PROSITE" id="PS01054">
    <property type="entry name" value="TRANSALDOLASE_1"/>
    <property type="match status" value="1"/>
</dbReference>
<dbReference type="PROSITE" id="PS00958">
    <property type="entry name" value="TRANSALDOLASE_2"/>
    <property type="match status" value="1"/>
</dbReference>
<protein>
    <recommendedName>
        <fullName>Probable transaldolase</fullName>
        <ecNumber>2.2.1.2</ecNumber>
    </recommendedName>
</protein>
<feature type="chain" id="PRO_0000173683" description="Probable transaldolase">
    <location>
        <begin position="1"/>
        <end position="214"/>
    </location>
</feature>
<feature type="active site" description="Schiff-base intermediate with substrate" evidence="1">
    <location>
        <position position="83"/>
    </location>
</feature>
<accession>P66959</accession>
<accession>Q48XD1</accession>
<accession>Q99YJ2</accession>
<comment type="function">
    <text evidence="1">Transaldolase is important for the balance of metabolites in the pentose-phosphate pathway.</text>
</comment>
<comment type="catalytic activity">
    <reaction>
        <text>D-sedoheptulose 7-phosphate + D-glyceraldehyde 3-phosphate = D-erythrose 4-phosphate + beta-D-fructose 6-phosphate</text>
        <dbReference type="Rhea" id="RHEA:17053"/>
        <dbReference type="ChEBI" id="CHEBI:16897"/>
        <dbReference type="ChEBI" id="CHEBI:57483"/>
        <dbReference type="ChEBI" id="CHEBI:57634"/>
        <dbReference type="ChEBI" id="CHEBI:59776"/>
        <dbReference type="EC" id="2.2.1.2"/>
    </reaction>
</comment>
<comment type="pathway">
    <text>Carbohydrate degradation; pentose phosphate pathway; D-glyceraldehyde 3-phosphate and beta-D-fructose 6-phosphate from D-ribose 5-phosphate and D-xylulose 5-phosphate (non-oxidative stage): step 2/3.</text>
</comment>
<comment type="subcellular location">
    <subcellularLocation>
        <location evidence="1">Cytoplasm</location>
    </subcellularLocation>
</comment>
<comment type="similarity">
    <text evidence="2">Belongs to the transaldolase family. Type 3B subfamily.</text>
</comment>
<keyword id="KW-0963">Cytoplasm</keyword>
<keyword id="KW-0570">Pentose shunt</keyword>
<keyword id="KW-1185">Reference proteome</keyword>
<keyword id="KW-0704">Schiff base</keyword>
<keyword id="KW-0808">Transferase</keyword>
<evidence type="ECO:0000250" key="1"/>
<evidence type="ECO:0000305" key="2"/>
<proteinExistence type="inferred from homology"/>
<sequence length="214" mass="23272">MKFFLDTANVAAIKAINELGVVDGVTTNPTIISREGRDFETVIKEICDIVDGPISAEVTGLTADAMVEEARSIAKWHDNVVVKIPMTTEGLKATNILSKEGIKTNVTLIFTVSQGLMAMKAGATYISPFIGRLEDIGTDAYQLISDLREIIDLYDFQAEIIAASIRTTAHVEAVAKLGAHIATIPDPLFAKMTQHPLTTNGLKTFMEDWASFKK</sequence>
<gene>
    <name type="primary">tal</name>
    <name type="ordered locus">SPy_1678</name>
    <name type="ordered locus">M5005_Spy1376</name>
</gene>